<protein>
    <recommendedName>
        <fullName>SURP and G-patch domain-containing protein 2</fullName>
    </recommendedName>
    <alternativeName>
        <fullName>Arginine/serine-rich-splicing factor 14</fullName>
    </alternativeName>
    <alternativeName>
        <fullName>Splicing factor, arginine/serine-rich 14</fullName>
    </alternativeName>
</protein>
<organism>
    <name type="scientific">Mus musculus</name>
    <name type="common">Mouse</name>
    <dbReference type="NCBI Taxonomy" id="10090"/>
    <lineage>
        <taxon>Eukaryota</taxon>
        <taxon>Metazoa</taxon>
        <taxon>Chordata</taxon>
        <taxon>Craniata</taxon>
        <taxon>Vertebrata</taxon>
        <taxon>Euteleostomi</taxon>
        <taxon>Mammalia</taxon>
        <taxon>Eutheria</taxon>
        <taxon>Euarchontoglires</taxon>
        <taxon>Glires</taxon>
        <taxon>Rodentia</taxon>
        <taxon>Myomorpha</taxon>
        <taxon>Muroidea</taxon>
        <taxon>Muridae</taxon>
        <taxon>Murinae</taxon>
        <taxon>Mus</taxon>
        <taxon>Mus</taxon>
    </lineage>
</organism>
<evidence type="ECO:0000250" key="1">
    <source>
        <dbReference type="UniProtKB" id="Q8IX01"/>
    </source>
</evidence>
<evidence type="ECO:0000255" key="2"/>
<evidence type="ECO:0000255" key="3">
    <source>
        <dbReference type="PROSITE-ProRule" id="PRU00092"/>
    </source>
</evidence>
<evidence type="ECO:0000256" key="4">
    <source>
        <dbReference type="SAM" id="MobiDB-lite"/>
    </source>
</evidence>
<evidence type="ECO:0000269" key="5">
    <source>
    </source>
</evidence>
<evidence type="ECO:0000305" key="6"/>
<evidence type="ECO:0007744" key="7">
    <source>
    </source>
</evidence>
<feature type="chain" id="PRO_0000097709" description="SURP and G-patch domain-containing protein 2">
    <location>
        <begin position="1"/>
        <end position="1067"/>
    </location>
</feature>
<feature type="repeat" description="SURP motif 1">
    <location>
        <begin position="573"/>
        <end position="616"/>
    </location>
</feature>
<feature type="repeat" description="SURP motif 2">
    <location>
        <begin position="770"/>
        <end position="813"/>
    </location>
</feature>
<feature type="domain" description="G-patch" evidence="3">
    <location>
        <begin position="996"/>
        <end position="1042"/>
    </location>
</feature>
<feature type="region of interest" description="Disordered" evidence="4">
    <location>
        <begin position="177"/>
        <end position="199"/>
    </location>
</feature>
<feature type="region of interest" description="Disordered" evidence="4">
    <location>
        <begin position="668"/>
        <end position="767"/>
    </location>
</feature>
<feature type="region of interest" description="Disordered" evidence="4">
    <location>
        <begin position="825"/>
        <end position="944"/>
    </location>
</feature>
<feature type="region of interest" description="Disordered" evidence="4">
    <location>
        <begin position="967"/>
        <end position="991"/>
    </location>
</feature>
<feature type="short sequence motif" description="Nuclear localization signal" evidence="2">
    <location>
        <begin position="980"/>
        <end position="985"/>
    </location>
</feature>
<feature type="compositionally biased region" description="Basic and acidic residues" evidence="4">
    <location>
        <begin position="177"/>
        <end position="189"/>
    </location>
</feature>
<feature type="compositionally biased region" description="Polar residues" evidence="4">
    <location>
        <begin position="680"/>
        <end position="691"/>
    </location>
</feature>
<feature type="compositionally biased region" description="Polar residues" evidence="4">
    <location>
        <begin position="825"/>
        <end position="840"/>
    </location>
</feature>
<feature type="compositionally biased region" description="Basic and acidic residues" evidence="4">
    <location>
        <begin position="843"/>
        <end position="856"/>
    </location>
</feature>
<feature type="compositionally biased region" description="Acidic residues" evidence="4">
    <location>
        <begin position="866"/>
        <end position="883"/>
    </location>
</feature>
<feature type="compositionally biased region" description="Polar residues" evidence="4">
    <location>
        <begin position="919"/>
        <end position="931"/>
    </location>
</feature>
<feature type="compositionally biased region" description="Basic residues" evidence="4">
    <location>
        <begin position="975"/>
        <end position="984"/>
    </location>
</feature>
<feature type="modified residue" description="Phosphoserine" evidence="1">
    <location>
        <position position="93"/>
    </location>
</feature>
<feature type="modified residue" description="Phosphoserine" evidence="7">
    <location>
        <position position="206"/>
    </location>
</feature>
<feature type="modified residue" description="Phosphothreonine" evidence="1">
    <location>
        <position position="265"/>
    </location>
</feature>
<feature type="modified residue" description="Phosphoserine" evidence="1">
    <location>
        <position position="267"/>
    </location>
</feature>
<feature type="modified residue" description="Phosphoserine" evidence="1">
    <location>
        <position position="586"/>
    </location>
</feature>
<feature type="modified residue" description="Phosphoserine" evidence="7">
    <location>
        <position position="740"/>
    </location>
</feature>
<feature type="modified residue" description="Phosphothreonine" evidence="7">
    <location>
        <position position="744"/>
    </location>
</feature>
<feature type="modified residue" description="Phosphoserine" evidence="7">
    <location>
        <position position="838"/>
    </location>
</feature>
<feature type="cross-link" description="Glycyl lysine isopeptide (Lys-Gly) (interchain with G-Cter in SUMO2)" evidence="1">
    <location>
        <position position="219"/>
    </location>
</feature>
<feature type="sequence variant" description="In strain: FVB/N." evidence="5">
    <original>I</original>
    <variation>L</variation>
    <location>
        <position position="666"/>
    </location>
</feature>
<feature type="sequence conflict" description="In Ref. 1; AAN77118." evidence="6" ref="1">
    <original>G</original>
    <variation>A</variation>
    <location>
        <position position="923"/>
    </location>
</feature>
<feature type="sequence conflict" description="In Ref. 2; BAC31218." evidence="6" ref="2">
    <original>P</original>
    <variation>T</variation>
    <location>
        <position position="949"/>
    </location>
</feature>
<comment type="function">
    <text evidence="6">May play a role in mRNA splicing.</text>
</comment>
<comment type="subcellular location">
    <subcellularLocation>
        <location evidence="6">Nucleus</location>
    </subcellularLocation>
</comment>
<comment type="sequence caution" evidence="6">
    <conflict type="frameshift">
        <sequence resource="EMBL-CDS" id="AAH57305"/>
    </conflict>
</comment>
<reference key="1">
    <citation type="journal article" date="2003" name="Gene">
        <title>SF4 and SFRS14, two related putative splicing factors on human chromosome 19p13.11.</title>
        <authorList>
            <person name="Sampson N.D."/>
            <person name="Hewitt J.E."/>
        </authorList>
    </citation>
    <scope>NUCLEOTIDE SEQUENCE [MRNA]</scope>
    <source>
        <strain>C57BL/6J</strain>
    </source>
</reference>
<reference key="2">
    <citation type="journal article" date="2005" name="Science">
        <title>The transcriptional landscape of the mammalian genome.</title>
        <authorList>
            <person name="Carninci P."/>
            <person name="Kasukawa T."/>
            <person name="Katayama S."/>
            <person name="Gough J."/>
            <person name="Frith M.C."/>
            <person name="Maeda N."/>
            <person name="Oyama R."/>
            <person name="Ravasi T."/>
            <person name="Lenhard B."/>
            <person name="Wells C."/>
            <person name="Kodzius R."/>
            <person name="Shimokawa K."/>
            <person name="Bajic V.B."/>
            <person name="Brenner S.E."/>
            <person name="Batalov S."/>
            <person name="Forrest A.R."/>
            <person name="Zavolan M."/>
            <person name="Davis M.J."/>
            <person name="Wilming L.G."/>
            <person name="Aidinis V."/>
            <person name="Allen J.E."/>
            <person name="Ambesi-Impiombato A."/>
            <person name="Apweiler R."/>
            <person name="Aturaliya R.N."/>
            <person name="Bailey T.L."/>
            <person name="Bansal M."/>
            <person name="Baxter L."/>
            <person name="Beisel K.W."/>
            <person name="Bersano T."/>
            <person name="Bono H."/>
            <person name="Chalk A.M."/>
            <person name="Chiu K.P."/>
            <person name="Choudhary V."/>
            <person name="Christoffels A."/>
            <person name="Clutterbuck D.R."/>
            <person name="Crowe M.L."/>
            <person name="Dalla E."/>
            <person name="Dalrymple B.P."/>
            <person name="de Bono B."/>
            <person name="Della Gatta G."/>
            <person name="di Bernardo D."/>
            <person name="Down T."/>
            <person name="Engstrom P."/>
            <person name="Fagiolini M."/>
            <person name="Faulkner G."/>
            <person name="Fletcher C.F."/>
            <person name="Fukushima T."/>
            <person name="Furuno M."/>
            <person name="Futaki S."/>
            <person name="Gariboldi M."/>
            <person name="Georgii-Hemming P."/>
            <person name="Gingeras T.R."/>
            <person name="Gojobori T."/>
            <person name="Green R.E."/>
            <person name="Gustincich S."/>
            <person name="Harbers M."/>
            <person name="Hayashi Y."/>
            <person name="Hensch T.K."/>
            <person name="Hirokawa N."/>
            <person name="Hill D."/>
            <person name="Huminiecki L."/>
            <person name="Iacono M."/>
            <person name="Ikeo K."/>
            <person name="Iwama A."/>
            <person name="Ishikawa T."/>
            <person name="Jakt M."/>
            <person name="Kanapin A."/>
            <person name="Katoh M."/>
            <person name="Kawasawa Y."/>
            <person name="Kelso J."/>
            <person name="Kitamura H."/>
            <person name="Kitano H."/>
            <person name="Kollias G."/>
            <person name="Krishnan S.P."/>
            <person name="Kruger A."/>
            <person name="Kummerfeld S.K."/>
            <person name="Kurochkin I.V."/>
            <person name="Lareau L.F."/>
            <person name="Lazarevic D."/>
            <person name="Lipovich L."/>
            <person name="Liu J."/>
            <person name="Liuni S."/>
            <person name="McWilliam S."/>
            <person name="Madan Babu M."/>
            <person name="Madera M."/>
            <person name="Marchionni L."/>
            <person name="Matsuda H."/>
            <person name="Matsuzawa S."/>
            <person name="Miki H."/>
            <person name="Mignone F."/>
            <person name="Miyake S."/>
            <person name="Morris K."/>
            <person name="Mottagui-Tabar S."/>
            <person name="Mulder N."/>
            <person name="Nakano N."/>
            <person name="Nakauchi H."/>
            <person name="Ng P."/>
            <person name="Nilsson R."/>
            <person name="Nishiguchi S."/>
            <person name="Nishikawa S."/>
            <person name="Nori F."/>
            <person name="Ohara O."/>
            <person name="Okazaki Y."/>
            <person name="Orlando V."/>
            <person name="Pang K.C."/>
            <person name="Pavan W.J."/>
            <person name="Pavesi G."/>
            <person name="Pesole G."/>
            <person name="Petrovsky N."/>
            <person name="Piazza S."/>
            <person name="Reed J."/>
            <person name="Reid J.F."/>
            <person name="Ring B.Z."/>
            <person name="Ringwald M."/>
            <person name="Rost B."/>
            <person name="Ruan Y."/>
            <person name="Salzberg S.L."/>
            <person name="Sandelin A."/>
            <person name="Schneider C."/>
            <person name="Schoenbach C."/>
            <person name="Sekiguchi K."/>
            <person name="Semple C.A."/>
            <person name="Seno S."/>
            <person name="Sessa L."/>
            <person name="Sheng Y."/>
            <person name="Shibata Y."/>
            <person name="Shimada H."/>
            <person name="Shimada K."/>
            <person name="Silva D."/>
            <person name="Sinclair B."/>
            <person name="Sperling S."/>
            <person name="Stupka E."/>
            <person name="Sugiura K."/>
            <person name="Sultana R."/>
            <person name="Takenaka Y."/>
            <person name="Taki K."/>
            <person name="Tammoja K."/>
            <person name="Tan S.L."/>
            <person name="Tang S."/>
            <person name="Taylor M.S."/>
            <person name="Tegner J."/>
            <person name="Teichmann S.A."/>
            <person name="Ueda H.R."/>
            <person name="van Nimwegen E."/>
            <person name="Verardo R."/>
            <person name="Wei C.L."/>
            <person name="Yagi K."/>
            <person name="Yamanishi H."/>
            <person name="Zabarovsky E."/>
            <person name="Zhu S."/>
            <person name="Zimmer A."/>
            <person name="Hide W."/>
            <person name="Bult C."/>
            <person name="Grimmond S.M."/>
            <person name="Teasdale R.D."/>
            <person name="Liu E.T."/>
            <person name="Brusic V."/>
            <person name="Quackenbush J."/>
            <person name="Wahlestedt C."/>
            <person name="Mattick J.S."/>
            <person name="Hume D.A."/>
            <person name="Kai C."/>
            <person name="Sasaki D."/>
            <person name="Tomaru Y."/>
            <person name="Fukuda S."/>
            <person name="Kanamori-Katayama M."/>
            <person name="Suzuki M."/>
            <person name="Aoki J."/>
            <person name="Arakawa T."/>
            <person name="Iida J."/>
            <person name="Imamura K."/>
            <person name="Itoh M."/>
            <person name="Kato T."/>
            <person name="Kawaji H."/>
            <person name="Kawagashira N."/>
            <person name="Kawashima T."/>
            <person name="Kojima M."/>
            <person name="Kondo S."/>
            <person name="Konno H."/>
            <person name="Nakano K."/>
            <person name="Ninomiya N."/>
            <person name="Nishio T."/>
            <person name="Okada M."/>
            <person name="Plessy C."/>
            <person name="Shibata K."/>
            <person name="Shiraki T."/>
            <person name="Suzuki S."/>
            <person name="Tagami M."/>
            <person name="Waki K."/>
            <person name="Watahiki A."/>
            <person name="Okamura-Oho Y."/>
            <person name="Suzuki H."/>
            <person name="Kawai J."/>
            <person name="Hayashizaki Y."/>
        </authorList>
    </citation>
    <scope>NUCLEOTIDE SEQUENCE [LARGE SCALE MRNA]</scope>
    <source>
        <strain>C57BL/6J</strain>
        <tissue>Thymus</tissue>
    </source>
</reference>
<reference key="3">
    <citation type="journal article" date="2004" name="Genome Res.">
        <title>The status, quality, and expansion of the NIH full-length cDNA project: the Mammalian Gene Collection (MGC).</title>
        <authorList>
            <consortium name="The MGC Project Team"/>
        </authorList>
    </citation>
    <scope>NUCLEOTIDE SEQUENCE [LARGE SCALE MRNA]</scope>
    <scope>VARIANT LEU-666</scope>
    <source>
        <strain>C57BL/6J</strain>
        <strain>FVB/N</strain>
        <tissue>Brain</tissue>
        <tissue>Mammary gland</tissue>
        <tissue>Mammary tumor</tissue>
    </source>
</reference>
<reference key="4">
    <citation type="journal article" date="2010" name="Cell">
        <title>A tissue-specific atlas of mouse protein phosphorylation and expression.</title>
        <authorList>
            <person name="Huttlin E.L."/>
            <person name="Jedrychowski M.P."/>
            <person name="Elias J.E."/>
            <person name="Goswami T."/>
            <person name="Rad R."/>
            <person name="Beausoleil S.A."/>
            <person name="Villen J."/>
            <person name="Haas W."/>
            <person name="Sowa M.E."/>
            <person name="Gygi S.P."/>
        </authorList>
    </citation>
    <scope>PHOSPHORYLATION [LARGE SCALE ANALYSIS] AT SER-206; SER-740; THR-744 AND SER-838</scope>
    <scope>IDENTIFICATION BY MASS SPECTROMETRY [LARGE SCALE ANALYSIS]</scope>
    <source>
        <tissue>Brain</tissue>
        <tissue>Heart</tissue>
        <tissue>Liver</tissue>
        <tissue>Testis</tissue>
    </source>
</reference>
<sequence>MAARRMAQESLDSVLQEKSKRYGDSEAVGEALHLKAQDLLRTGSRARADVYEDIHGDSRYSASGSGVYSLDMGREGLRGDMFVGPSFRSSNQSVGEDSYLRKECGRDLEPAHTDSRDQSFGHRNLGHFPSQDWKLALRGSWEQDLGHSVSQESSWSQEYGFGPSLLGDLASSRRMEKESRDYDLDHPGEVDSVSRSSGQVLTRGRSLNIADQEGTLLGKGDTQGLLGAKGVGKLITLKSMTTKKIPVASRITSKPQGTNQIQKPTPSPDVTIGTSPVLDEIQFAALKIPLGLDLRTLGLPRRKMGFDAIDKADVFSRFGIEIIKWAGFHTIKDDLKFSQLFQTLFELETETCAKMLASFKCSLKPEHRDFCFFTIKFLKHSALKTPRVDNEFLNMLLDKGAVKTKNCFFEIIKPFDKSIMRLQDRLLKGVTPLLMACNAYELSVKMKTLTSPLDLAMALETTNSLCRKSLALLGQTFSLASSFRQEKILEAVGLQDIAPSPAYFPNFEDSTLFGREYIDHLKAWLMASGYPLQLKRAVPPESREQKTTAQTWASSTLSQAVPQRADHRVVDTIDQLVMRVIQGRLSPRERTLLLQDPAYWFLSDESSLEYKYYKLKLAESQRLNHSWPIVERRPTPAQCAVRAMLYAQAVRSLKRRLLPWQRRRLIRSQGPRGLKAKKATTAQQTSLSSGTRQKHHGRQASGSLRVKPPPRDSSDAAQDCLSEPAKPCPQPSSPGALGPSPRPTGADDSEALPASSRCPSANMDAKTMETAEKLARFVAQVGPEIEQFSIENSTDNPDLWFLHDQSSSAFKFYREKVLELCPSISFQSTGEAGDSVQSPTAGKEGKGEPQEGHPEQEASLEGTEVLPEEEEEDEEESEDEGGEETSTLRPQAGAAKCPGSEGSSPTDSIPGEGSREDQASTPGLSQASSGSCFPRKRISSKSLKVGMIPAPKRVCLIQESKVHEPVRIAYDRPRGRPIAKKKKPKDMEFSQQKLTDKNVGFQMLQKMGWKEGHGLGSLGKGIREPVSVGALSEGEGLGADGPEQKEDTFDVFRQRMMQMYRHKRASK</sequence>
<keyword id="KW-1017">Isopeptide bond</keyword>
<keyword id="KW-0507">mRNA processing</keyword>
<keyword id="KW-0508">mRNA splicing</keyword>
<keyword id="KW-0539">Nucleus</keyword>
<keyword id="KW-0597">Phosphoprotein</keyword>
<keyword id="KW-1185">Reference proteome</keyword>
<keyword id="KW-0677">Repeat</keyword>
<keyword id="KW-0832">Ubl conjugation</keyword>
<proteinExistence type="evidence at protein level"/>
<name>SUGP2_MOUSE</name>
<accession>Q8CH09</accession>
<accession>Q6PG19</accession>
<accession>Q80UY8</accession>
<accession>Q8BY32</accession>
<accession>Q8CFM0</accession>
<dbReference type="EMBL" id="AF518875">
    <property type="protein sequence ID" value="AAN77118.1"/>
    <property type="molecule type" value="mRNA"/>
</dbReference>
<dbReference type="EMBL" id="AK042293">
    <property type="protein sequence ID" value="BAC31218.1"/>
    <property type="molecule type" value="mRNA"/>
</dbReference>
<dbReference type="EMBL" id="BC023276">
    <property type="protein sequence ID" value="AAH23276.1"/>
    <property type="molecule type" value="mRNA"/>
</dbReference>
<dbReference type="EMBL" id="BC042763">
    <property type="protein sequence ID" value="AAH42763.1"/>
    <property type="molecule type" value="mRNA"/>
</dbReference>
<dbReference type="EMBL" id="BC057305">
    <property type="protein sequence ID" value="AAH57305.1"/>
    <property type="status" value="ALT_FRAME"/>
    <property type="molecule type" value="mRNA"/>
</dbReference>
<dbReference type="CCDS" id="CCDS22362.1"/>
<dbReference type="RefSeq" id="NP_001161762.1">
    <property type="nucleotide sequence ID" value="NM_001168290.2"/>
</dbReference>
<dbReference type="RefSeq" id="NP_766343.3">
    <property type="nucleotide sequence ID" value="NM_172755.3"/>
</dbReference>
<dbReference type="RefSeq" id="XP_006509707.1">
    <property type="nucleotide sequence ID" value="XM_006509644.2"/>
</dbReference>
<dbReference type="RefSeq" id="XP_006509708.1">
    <property type="nucleotide sequence ID" value="XM_006509645.3"/>
</dbReference>
<dbReference type="RefSeq" id="XP_006509709.1">
    <property type="nucleotide sequence ID" value="XM_006509646.1"/>
</dbReference>
<dbReference type="RefSeq" id="XP_036009839.1">
    <property type="nucleotide sequence ID" value="XM_036153946.1"/>
</dbReference>
<dbReference type="RefSeq" id="XP_036009840.1">
    <property type="nucleotide sequence ID" value="XM_036153947.1"/>
</dbReference>
<dbReference type="SMR" id="Q8CH09"/>
<dbReference type="BioGRID" id="231520">
    <property type="interactions" value="3"/>
</dbReference>
<dbReference type="FunCoup" id="Q8CH09">
    <property type="interactions" value="2575"/>
</dbReference>
<dbReference type="IntAct" id="Q8CH09">
    <property type="interactions" value="1"/>
</dbReference>
<dbReference type="MINT" id="Q8CH09"/>
<dbReference type="STRING" id="10090.ENSMUSP00000128029"/>
<dbReference type="GlyGen" id="Q8CH09">
    <property type="glycosylation" value="3 sites, 1 N-linked glycan (1 site)"/>
</dbReference>
<dbReference type="iPTMnet" id="Q8CH09"/>
<dbReference type="PhosphoSitePlus" id="Q8CH09"/>
<dbReference type="SwissPalm" id="Q8CH09"/>
<dbReference type="jPOST" id="Q8CH09"/>
<dbReference type="PaxDb" id="10090-ENSMUSP00000091167"/>
<dbReference type="PeptideAtlas" id="Q8CH09"/>
<dbReference type="ProteomicsDB" id="257375"/>
<dbReference type="Pumba" id="Q8CH09"/>
<dbReference type="Antibodypedia" id="28312">
    <property type="antibodies" value="157 antibodies from 26 providers"/>
</dbReference>
<dbReference type="DNASU" id="234373"/>
<dbReference type="Ensembl" id="ENSMUST00000093458.11">
    <property type="protein sequence ID" value="ENSMUSP00000091167.5"/>
    <property type="gene ID" value="ENSMUSG00000036054.16"/>
</dbReference>
<dbReference type="Ensembl" id="ENSMUST00000131489.8">
    <property type="protein sequence ID" value="ENSMUSP00000114833.2"/>
    <property type="gene ID" value="ENSMUSG00000036054.16"/>
</dbReference>
<dbReference type="Ensembl" id="ENSMUST00000164403.8">
    <property type="protein sequence ID" value="ENSMUSP00000128029.2"/>
    <property type="gene ID" value="ENSMUSG00000036054.16"/>
</dbReference>
<dbReference type="GeneID" id="234373"/>
<dbReference type="KEGG" id="mmu:234373"/>
<dbReference type="UCSC" id="uc009lzk.2">
    <property type="organism name" value="mouse"/>
</dbReference>
<dbReference type="AGR" id="MGI:2678085"/>
<dbReference type="CTD" id="10147"/>
<dbReference type="MGI" id="MGI:2678085">
    <property type="gene designation" value="Sugp2"/>
</dbReference>
<dbReference type="VEuPathDB" id="HostDB:ENSMUSG00000036054"/>
<dbReference type="eggNOG" id="KOG0965">
    <property type="taxonomic scope" value="Eukaryota"/>
</dbReference>
<dbReference type="GeneTree" id="ENSGT00410000025695"/>
<dbReference type="HOGENOM" id="CLU_010012_0_0_1"/>
<dbReference type="InParanoid" id="Q8CH09"/>
<dbReference type="OMA" id="KAKRYHI"/>
<dbReference type="OrthoDB" id="4822at2759"/>
<dbReference type="PhylomeDB" id="Q8CH09"/>
<dbReference type="TreeFam" id="TF326321"/>
<dbReference type="BioGRID-ORCS" id="234373">
    <property type="hits" value="1 hit in 80 CRISPR screens"/>
</dbReference>
<dbReference type="ChiTaRS" id="Sugp2">
    <property type="organism name" value="mouse"/>
</dbReference>
<dbReference type="PRO" id="PR:Q8CH09"/>
<dbReference type="Proteomes" id="UP000000589">
    <property type="component" value="Chromosome 8"/>
</dbReference>
<dbReference type="RNAct" id="Q8CH09">
    <property type="molecule type" value="protein"/>
</dbReference>
<dbReference type="Bgee" id="ENSMUSG00000036054">
    <property type="expression patterns" value="Expressed in spermatocyte and 266 other cell types or tissues"/>
</dbReference>
<dbReference type="ExpressionAtlas" id="Q8CH09">
    <property type="expression patterns" value="baseline and differential"/>
</dbReference>
<dbReference type="GO" id="GO:0016604">
    <property type="term" value="C:nuclear body"/>
    <property type="evidence" value="ECO:0007669"/>
    <property type="project" value="Ensembl"/>
</dbReference>
<dbReference type="GO" id="GO:0003723">
    <property type="term" value="F:RNA binding"/>
    <property type="evidence" value="ECO:0007669"/>
    <property type="project" value="InterPro"/>
</dbReference>
<dbReference type="GO" id="GO:0006397">
    <property type="term" value="P:mRNA processing"/>
    <property type="evidence" value="ECO:0007669"/>
    <property type="project" value="UniProtKB-KW"/>
</dbReference>
<dbReference type="GO" id="GO:0008380">
    <property type="term" value="P:RNA splicing"/>
    <property type="evidence" value="ECO:0007669"/>
    <property type="project" value="UniProtKB-KW"/>
</dbReference>
<dbReference type="Gene3D" id="1.10.10.790">
    <property type="entry name" value="Surp module"/>
    <property type="match status" value="2"/>
</dbReference>
<dbReference type="InterPro" id="IPR000467">
    <property type="entry name" value="G_patch_dom"/>
</dbReference>
<dbReference type="InterPro" id="IPR040169">
    <property type="entry name" value="SUGP1/2"/>
</dbReference>
<dbReference type="InterPro" id="IPR000061">
    <property type="entry name" value="Surp"/>
</dbReference>
<dbReference type="InterPro" id="IPR035967">
    <property type="entry name" value="SWAP/Surp_sf"/>
</dbReference>
<dbReference type="PANTHER" id="PTHR23340">
    <property type="entry name" value="ARGININE/SERINE RICH SPLICING FACTOR SF4/14"/>
    <property type="match status" value="1"/>
</dbReference>
<dbReference type="PANTHER" id="PTHR23340:SF2">
    <property type="entry name" value="SURP AND G-PATCH DOMAIN-CONTAINING PROTEIN 2"/>
    <property type="match status" value="1"/>
</dbReference>
<dbReference type="Pfam" id="PF01585">
    <property type="entry name" value="G-patch"/>
    <property type="match status" value="1"/>
</dbReference>
<dbReference type="Pfam" id="PF01805">
    <property type="entry name" value="Surp"/>
    <property type="match status" value="1"/>
</dbReference>
<dbReference type="SMART" id="SM00443">
    <property type="entry name" value="G_patch"/>
    <property type="match status" value="1"/>
</dbReference>
<dbReference type="SMART" id="SM00648">
    <property type="entry name" value="SWAP"/>
    <property type="match status" value="2"/>
</dbReference>
<dbReference type="SUPFAM" id="SSF109905">
    <property type="entry name" value="Surp module (SWAP domain)"/>
    <property type="match status" value="2"/>
</dbReference>
<dbReference type="PROSITE" id="PS50174">
    <property type="entry name" value="G_PATCH"/>
    <property type="match status" value="1"/>
</dbReference>
<dbReference type="PROSITE" id="PS50128">
    <property type="entry name" value="SURP"/>
    <property type="match status" value="1"/>
</dbReference>
<gene>
    <name type="primary">Sugp2</name>
    <name type="synonym">Sfrs14</name>
    <name type="synonym">Srsf14</name>
</gene>